<gene>
    <name type="primary">sunA</name>
    <name type="ordered locus">SPBc2p020</name>
</gene>
<organismHost>
    <name type="scientific">Bacillus pumilus</name>
    <name type="common">Bacillus mesentericus</name>
    <dbReference type="NCBI Taxonomy" id="1408"/>
</organismHost>
<organismHost>
    <name type="scientific">Bacillus subtilis</name>
    <dbReference type="NCBI Taxonomy" id="1423"/>
</organismHost>
<dbReference type="EMBL" id="AF020713">
    <property type="protein sequence ID" value="AAC12992.1"/>
    <property type="molecule type" value="Genomic_DNA"/>
</dbReference>
<dbReference type="PIR" id="T12783">
    <property type="entry name" value="T12783"/>
</dbReference>
<dbReference type="BMRB" id="P68578"/>
<dbReference type="SMR" id="P68578"/>
<dbReference type="GlyCosmos" id="P68578">
    <property type="glycosylation" value="1 site, No reported glycans"/>
</dbReference>
<dbReference type="KEGG" id="vg:1261375"/>
<dbReference type="Proteomes" id="UP000009091">
    <property type="component" value="Genome"/>
</dbReference>
<dbReference type="GO" id="GO:0005576">
    <property type="term" value="C:extracellular region"/>
    <property type="evidence" value="ECO:0007669"/>
    <property type="project" value="UniProtKB-SubCell"/>
</dbReference>
<dbReference type="GO" id="GO:0042742">
    <property type="term" value="P:defense response to bacterium"/>
    <property type="evidence" value="ECO:0007669"/>
    <property type="project" value="UniProtKB-KW"/>
</dbReference>
<dbReference type="GO" id="GO:0031640">
    <property type="term" value="P:killing of cells of another organism"/>
    <property type="evidence" value="ECO:0007669"/>
    <property type="project" value="UniProtKB-KW"/>
</dbReference>
<dbReference type="InterPro" id="IPR026479">
    <property type="entry name" value="Glycopep_SunS"/>
</dbReference>
<dbReference type="NCBIfam" id="TIGR04196">
    <property type="entry name" value="glycopep_SunS"/>
    <property type="match status" value="1"/>
</dbReference>
<dbReference type="Pfam" id="PF19151">
    <property type="entry name" value="Sublancin"/>
    <property type="match status" value="1"/>
</dbReference>
<organism>
    <name type="scientific">Bacillus phage SPbeta</name>
    <name type="common">Bacillus phage SPBc2</name>
    <name type="synonym">Bacteriophage SP-beta</name>
    <dbReference type="NCBI Taxonomy" id="2932878"/>
    <lineage>
        <taxon>Viruses</taxon>
        <taxon>Duplodnaviria</taxon>
        <taxon>Heunggongvirae</taxon>
        <taxon>Uroviricota</taxon>
        <taxon>Caudoviricetes</taxon>
        <taxon>Spbetavirus</taxon>
        <taxon>Spbetavirus SPbeta</taxon>
    </lineage>
</organism>
<reference key="1">
    <citation type="journal article" date="1999" name="Microbiology">
        <title>Nucleotide sequence of the Bacillus subtilis temperate bacteriophage SPbetac2.</title>
        <authorList>
            <person name="Lazarevic V."/>
            <person name="Duesterhoeft A."/>
            <person name="Soldo B."/>
            <person name="Hilbert H."/>
            <person name="Mauel C."/>
            <person name="Karamata D."/>
        </authorList>
    </citation>
    <scope>NUCLEOTIDE SEQUENCE [LARGE SCALE GENOMIC DNA]</scope>
</reference>
<proteinExistence type="inferred from homology"/>
<sequence>MEKLFKEVKLEELENQKGSGLGKAQCAALWLQCASGGTIGCGGGAVACQNYRQFCR</sequence>
<feature type="propeptide" id="PRO_0000017146" evidence="1">
    <location>
        <begin position="1"/>
        <end position="19"/>
    </location>
</feature>
<feature type="peptide" id="PRO_0000017147" description="Bacteriocin sublancin-168">
    <location>
        <begin position="20"/>
        <end position="56"/>
    </location>
</feature>
<feature type="glycosylation site" description="S-linked (Glc) cysteine; by host" evidence="2">
    <location>
        <position position="41"/>
    </location>
</feature>
<feature type="disulfide bond" evidence="2">
    <location>
        <begin position="26"/>
        <end position="55"/>
    </location>
</feature>
<feature type="disulfide bond" evidence="2">
    <location>
        <begin position="33"/>
        <end position="48"/>
    </location>
</feature>
<comment type="function">
    <text evidence="2">Bacteriocin active against Gram-positive bacteria. Inhibits B.cereus spore outgrowth, after the germination stage, approximately 1000-fold better than it inhibits exponential growth of the same cells. Inhibits B.subtilis strain ATCC 6633.</text>
</comment>
<comment type="subunit">
    <text evidence="2">Monomer.</text>
</comment>
<comment type="subcellular location">
    <subcellularLocation>
        <location evidence="2">Secreted</location>
    </subcellularLocation>
    <text evidence="2">Extracellular region.</text>
</comment>
<comment type="PTM">
    <text evidence="2">Production of active sublancin-168 requires at least one thiol-disulfide oxidoreductase (BdbB or, in its absence, BdbC). Membrane translocation and cleavage of the precursor are probably performed by SunT.</text>
</comment>
<accession>P68578</accession>
<accession>O34781</accession>
<accession>O64033</accession>
<protein>
    <recommendedName>
        <fullName>Bacteriocin sublancin-168</fullName>
    </recommendedName>
</protein>
<name>SUNA_BPSPB</name>
<evidence type="ECO:0000250" key="1"/>
<evidence type="ECO:0000250" key="2">
    <source>
        <dbReference type="UniProtKB" id="P68577"/>
    </source>
</evidence>
<keyword id="KW-0044">Antibiotic</keyword>
<keyword id="KW-0929">Antimicrobial</keyword>
<keyword id="KW-0078">Bacteriocin</keyword>
<keyword id="KW-1015">Disulfide bond</keyword>
<keyword id="KW-0325">Glycoprotein</keyword>
<keyword id="KW-1185">Reference proteome</keyword>
<keyword id="KW-0964">Secreted</keyword>